<accession>Q7NRW7</accession>
<feature type="chain" id="PRO_0000115088" description="DNA mismatch repair protein MutS">
    <location>
        <begin position="1"/>
        <end position="873"/>
    </location>
</feature>
<feature type="region of interest" description="Disordered" evidence="2">
    <location>
        <begin position="1"/>
        <end position="34"/>
    </location>
</feature>
<feature type="compositionally biased region" description="Basic residues" evidence="2">
    <location>
        <begin position="8"/>
        <end position="26"/>
    </location>
</feature>
<feature type="binding site" evidence="1">
    <location>
        <begin position="635"/>
        <end position="642"/>
    </location>
    <ligand>
        <name>ATP</name>
        <dbReference type="ChEBI" id="CHEBI:30616"/>
    </ligand>
</feature>
<keyword id="KW-0067">ATP-binding</keyword>
<keyword id="KW-0227">DNA damage</keyword>
<keyword id="KW-0234">DNA repair</keyword>
<keyword id="KW-0238">DNA-binding</keyword>
<keyword id="KW-0547">Nucleotide-binding</keyword>
<keyword id="KW-1185">Reference proteome</keyword>
<comment type="function">
    <text evidence="1">This protein is involved in the repair of mismatches in DNA. It is possible that it carries out the mismatch recognition step. This protein has a weak ATPase activity.</text>
</comment>
<comment type="similarity">
    <text evidence="1">Belongs to the DNA mismatch repair MutS family.</text>
</comment>
<evidence type="ECO:0000255" key="1">
    <source>
        <dbReference type="HAMAP-Rule" id="MF_00096"/>
    </source>
</evidence>
<evidence type="ECO:0000256" key="2">
    <source>
        <dbReference type="SAM" id="MobiDB-lite"/>
    </source>
</evidence>
<gene>
    <name evidence="1" type="primary">mutS</name>
    <name type="ordered locus">CV_3661</name>
</gene>
<protein>
    <recommendedName>
        <fullName evidence="1">DNA mismatch repair protein MutS</fullName>
    </recommendedName>
</protein>
<sequence length="873" mass="95312">MAAIPTPRLHRGVTHLSRQTKSRARHPMSTPQHTPMMQQYLALKREHADKLLFYRMGDFYELFYEDAEKASRLLDITLTARGASAGNPIKMAGIPYHAAEGYLARLVKMGESVAIAEQIGDPALAKGPVERKVVRIVTPGTLTDAALLDDKRDNLVLAVNMVKGVLGLAWLSLASGEFKIMQASVEDLASELERLKPAELVIPDDTGLAAFEGISTPKKKLPPWQFDIESSKLALTRHFGTRDLAGFGADTLPVAVGAAGALLEYVKSTQGVNPAHISALSVEDAGELIRMDAATRRNLELTETIRGEASPTLASLLDTCATSMGSRLLGHWLHHPMRNHGKLARRHGAVRALLSRYQDVHAELDQVSDIERITSRVALRSARPRDLSALRDSLTALSGVKALAASLDSELLNELAGVLPTESPVQKMLAAAILPEPATFLRDGGVINDGFSPVLDELRAIQTDCGDFLLKLEAREKERTGITTLKVEFNRVHGFYIEVSKAQSDKVPDDYRRRQTLKNAERYITPELKEFEDKALTAQDRALALEKQLYEALLDQLAPHIAELKLIAQAVAALDVLSAFAQRAAIGNYAEPQFVPEPKLDIVAGRHPVVEAEVERFIANDTRLSAERKLLLITGPNMGGKSTYMRQNALITLLAHVGSFVPADSAVIGPIDRIFTRIGASDDLAGGRSTFMVEMTETANILNNASEHSLVLMDEVGRGTSTFDGLALAWAIARALIEKNRAYTLFATHYFELTTLAGEYPAVANVHLSAVEHKDRIVFLHHVEDGPASQSYGLAVAQLAGVPAKVIRDARRHLAELENQSAARVQPDLFSAPAPASEPELSPAMDRLQEIDPDVLSPRQALEILYELKKLAD</sequence>
<name>MUTS_CHRVO</name>
<organism>
    <name type="scientific">Chromobacterium violaceum (strain ATCC 12472 / DSM 30191 / JCM 1249 / CCUG 213 / NBRC 12614 / NCIMB 9131 / NCTC 9757 / MK)</name>
    <dbReference type="NCBI Taxonomy" id="243365"/>
    <lineage>
        <taxon>Bacteria</taxon>
        <taxon>Pseudomonadati</taxon>
        <taxon>Pseudomonadota</taxon>
        <taxon>Betaproteobacteria</taxon>
        <taxon>Neisseriales</taxon>
        <taxon>Chromobacteriaceae</taxon>
        <taxon>Chromobacterium</taxon>
    </lineage>
</organism>
<dbReference type="EMBL" id="AE016825">
    <property type="protein sequence ID" value="AAQ61323.1"/>
    <property type="molecule type" value="Genomic_DNA"/>
</dbReference>
<dbReference type="SMR" id="Q7NRW7"/>
<dbReference type="STRING" id="243365.CV_3661"/>
<dbReference type="KEGG" id="cvi:CV_3661"/>
<dbReference type="eggNOG" id="COG0249">
    <property type="taxonomic scope" value="Bacteria"/>
</dbReference>
<dbReference type="HOGENOM" id="CLU_002472_4_0_4"/>
<dbReference type="OrthoDB" id="9802448at2"/>
<dbReference type="Proteomes" id="UP000001424">
    <property type="component" value="Chromosome"/>
</dbReference>
<dbReference type="GO" id="GO:0005829">
    <property type="term" value="C:cytosol"/>
    <property type="evidence" value="ECO:0007669"/>
    <property type="project" value="TreeGrafter"/>
</dbReference>
<dbReference type="GO" id="GO:0005524">
    <property type="term" value="F:ATP binding"/>
    <property type="evidence" value="ECO:0007669"/>
    <property type="project" value="UniProtKB-UniRule"/>
</dbReference>
<dbReference type="GO" id="GO:0140664">
    <property type="term" value="F:ATP-dependent DNA damage sensor activity"/>
    <property type="evidence" value="ECO:0007669"/>
    <property type="project" value="InterPro"/>
</dbReference>
<dbReference type="GO" id="GO:0003684">
    <property type="term" value="F:damaged DNA binding"/>
    <property type="evidence" value="ECO:0007669"/>
    <property type="project" value="UniProtKB-UniRule"/>
</dbReference>
<dbReference type="GO" id="GO:0030983">
    <property type="term" value="F:mismatched DNA binding"/>
    <property type="evidence" value="ECO:0007669"/>
    <property type="project" value="InterPro"/>
</dbReference>
<dbReference type="GO" id="GO:0006298">
    <property type="term" value="P:mismatch repair"/>
    <property type="evidence" value="ECO:0007669"/>
    <property type="project" value="UniProtKB-UniRule"/>
</dbReference>
<dbReference type="CDD" id="cd03284">
    <property type="entry name" value="ABC_MutS1"/>
    <property type="match status" value="1"/>
</dbReference>
<dbReference type="FunFam" id="1.10.1420.10:FF:000001">
    <property type="entry name" value="DNA mismatch repair protein MutS"/>
    <property type="match status" value="1"/>
</dbReference>
<dbReference type="FunFam" id="3.40.1170.10:FF:000001">
    <property type="entry name" value="DNA mismatch repair protein MutS"/>
    <property type="match status" value="1"/>
</dbReference>
<dbReference type="FunFam" id="3.40.50.300:FF:000870">
    <property type="entry name" value="MutS protein homolog 4"/>
    <property type="match status" value="1"/>
</dbReference>
<dbReference type="Gene3D" id="1.10.1420.10">
    <property type="match status" value="2"/>
</dbReference>
<dbReference type="Gene3D" id="6.10.140.430">
    <property type="match status" value="1"/>
</dbReference>
<dbReference type="Gene3D" id="3.40.1170.10">
    <property type="entry name" value="DNA repair protein MutS, domain I"/>
    <property type="match status" value="1"/>
</dbReference>
<dbReference type="Gene3D" id="3.30.420.110">
    <property type="entry name" value="MutS, connector domain"/>
    <property type="match status" value="1"/>
</dbReference>
<dbReference type="Gene3D" id="3.40.50.300">
    <property type="entry name" value="P-loop containing nucleotide triphosphate hydrolases"/>
    <property type="match status" value="1"/>
</dbReference>
<dbReference type="HAMAP" id="MF_00096">
    <property type="entry name" value="MutS"/>
    <property type="match status" value="1"/>
</dbReference>
<dbReference type="InterPro" id="IPR005748">
    <property type="entry name" value="DNA_mismatch_repair_MutS"/>
</dbReference>
<dbReference type="InterPro" id="IPR007695">
    <property type="entry name" value="DNA_mismatch_repair_MutS-lik_N"/>
</dbReference>
<dbReference type="InterPro" id="IPR017261">
    <property type="entry name" value="DNA_mismatch_repair_MutS/MSH"/>
</dbReference>
<dbReference type="InterPro" id="IPR000432">
    <property type="entry name" value="DNA_mismatch_repair_MutS_C"/>
</dbReference>
<dbReference type="InterPro" id="IPR007861">
    <property type="entry name" value="DNA_mismatch_repair_MutS_clamp"/>
</dbReference>
<dbReference type="InterPro" id="IPR007696">
    <property type="entry name" value="DNA_mismatch_repair_MutS_core"/>
</dbReference>
<dbReference type="InterPro" id="IPR016151">
    <property type="entry name" value="DNA_mismatch_repair_MutS_N"/>
</dbReference>
<dbReference type="InterPro" id="IPR036187">
    <property type="entry name" value="DNA_mismatch_repair_MutS_sf"/>
</dbReference>
<dbReference type="InterPro" id="IPR007860">
    <property type="entry name" value="DNA_mmatch_repair_MutS_con_dom"/>
</dbReference>
<dbReference type="InterPro" id="IPR045076">
    <property type="entry name" value="MutS"/>
</dbReference>
<dbReference type="InterPro" id="IPR036678">
    <property type="entry name" value="MutS_con_dom_sf"/>
</dbReference>
<dbReference type="InterPro" id="IPR027417">
    <property type="entry name" value="P-loop_NTPase"/>
</dbReference>
<dbReference type="NCBIfam" id="TIGR01070">
    <property type="entry name" value="mutS1"/>
    <property type="match status" value="1"/>
</dbReference>
<dbReference type="NCBIfam" id="NF003810">
    <property type="entry name" value="PRK05399.1"/>
    <property type="match status" value="1"/>
</dbReference>
<dbReference type="PANTHER" id="PTHR11361:SF34">
    <property type="entry name" value="DNA MISMATCH REPAIR PROTEIN MSH1, MITOCHONDRIAL"/>
    <property type="match status" value="1"/>
</dbReference>
<dbReference type="PANTHER" id="PTHR11361">
    <property type="entry name" value="DNA MISMATCH REPAIR PROTEIN MUTS FAMILY MEMBER"/>
    <property type="match status" value="1"/>
</dbReference>
<dbReference type="Pfam" id="PF01624">
    <property type="entry name" value="MutS_I"/>
    <property type="match status" value="1"/>
</dbReference>
<dbReference type="Pfam" id="PF05188">
    <property type="entry name" value="MutS_II"/>
    <property type="match status" value="1"/>
</dbReference>
<dbReference type="Pfam" id="PF05192">
    <property type="entry name" value="MutS_III"/>
    <property type="match status" value="1"/>
</dbReference>
<dbReference type="Pfam" id="PF05190">
    <property type="entry name" value="MutS_IV"/>
    <property type="match status" value="1"/>
</dbReference>
<dbReference type="Pfam" id="PF00488">
    <property type="entry name" value="MutS_V"/>
    <property type="match status" value="1"/>
</dbReference>
<dbReference type="PIRSF" id="PIRSF037677">
    <property type="entry name" value="DNA_mis_repair_Msh6"/>
    <property type="match status" value="1"/>
</dbReference>
<dbReference type="SMART" id="SM00534">
    <property type="entry name" value="MUTSac"/>
    <property type="match status" value="1"/>
</dbReference>
<dbReference type="SMART" id="SM00533">
    <property type="entry name" value="MUTSd"/>
    <property type="match status" value="1"/>
</dbReference>
<dbReference type="SUPFAM" id="SSF55271">
    <property type="entry name" value="DNA repair protein MutS, domain I"/>
    <property type="match status" value="1"/>
</dbReference>
<dbReference type="SUPFAM" id="SSF53150">
    <property type="entry name" value="DNA repair protein MutS, domain II"/>
    <property type="match status" value="1"/>
</dbReference>
<dbReference type="SUPFAM" id="SSF48334">
    <property type="entry name" value="DNA repair protein MutS, domain III"/>
    <property type="match status" value="1"/>
</dbReference>
<dbReference type="SUPFAM" id="SSF52540">
    <property type="entry name" value="P-loop containing nucleoside triphosphate hydrolases"/>
    <property type="match status" value="1"/>
</dbReference>
<dbReference type="PROSITE" id="PS00486">
    <property type="entry name" value="DNA_MISMATCH_REPAIR_2"/>
    <property type="match status" value="1"/>
</dbReference>
<reference key="1">
    <citation type="journal article" date="2003" name="Proc. Natl. Acad. Sci. U.S.A.">
        <title>The complete genome sequence of Chromobacterium violaceum reveals remarkable and exploitable bacterial adaptability.</title>
        <authorList>
            <person name="Vasconcelos A.T.R."/>
            <person name="de Almeida D.F."/>
            <person name="Hungria M."/>
            <person name="Guimaraes C.T."/>
            <person name="Antonio R.V."/>
            <person name="Almeida F.C."/>
            <person name="de Almeida L.G.P."/>
            <person name="de Almeida R."/>
            <person name="Alves-Gomes J.A."/>
            <person name="Andrade E.M."/>
            <person name="Araripe J."/>
            <person name="de Araujo M.F.F."/>
            <person name="Astolfi-Filho S."/>
            <person name="Azevedo V."/>
            <person name="Baptista A.J."/>
            <person name="Bataus L.A.M."/>
            <person name="Batista J.S."/>
            <person name="Belo A."/>
            <person name="van den Berg C."/>
            <person name="Bogo M."/>
            <person name="Bonatto S."/>
            <person name="Bordignon J."/>
            <person name="Brigido M.M."/>
            <person name="Brito C.A."/>
            <person name="Brocchi M."/>
            <person name="Burity H.A."/>
            <person name="Camargo A.A."/>
            <person name="Cardoso D.D.P."/>
            <person name="Carneiro N.P."/>
            <person name="Carraro D.M."/>
            <person name="Carvalho C.M.B."/>
            <person name="Cascardo J.C.M."/>
            <person name="Cavada B.S."/>
            <person name="Chueire L.M.O."/>
            <person name="Creczynski-Pasa T.B."/>
            <person name="Cunha-Junior N.C."/>
            <person name="Fagundes N."/>
            <person name="Falcao C.L."/>
            <person name="Fantinatti F."/>
            <person name="Farias I.P."/>
            <person name="Felipe M.S.S."/>
            <person name="Ferrari L.P."/>
            <person name="Ferro J.A."/>
            <person name="Ferro M.I.T."/>
            <person name="Franco G.R."/>
            <person name="Freitas N.S.A."/>
            <person name="Furlan L.R."/>
            <person name="Gazzinelli R.T."/>
            <person name="Gomes E.A."/>
            <person name="Goncalves P.R."/>
            <person name="Grangeiro T.B."/>
            <person name="Grattapaglia D."/>
            <person name="Grisard E.C."/>
            <person name="Hanna E.S."/>
            <person name="Jardim S.N."/>
            <person name="Laurino J."/>
            <person name="Leoi L.C.T."/>
            <person name="Lima L.F.A."/>
            <person name="Loureiro M.F."/>
            <person name="Lyra M.C.C.P."/>
            <person name="Madeira H.M.F."/>
            <person name="Manfio G.P."/>
            <person name="Maranhao A.Q."/>
            <person name="Martins W.S."/>
            <person name="di Mauro S.M.Z."/>
            <person name="de Medeiros S.R.B."/>
            <person name="Meissner R.V."/>
            <person name="Moreira M.A.M."/>
            <person name="Nascimento F.F."/>
            <person name="Nicolas M.F."/>
            <person name="Oliveira J.G."/>
            <person name="Oliveira S.C."/>
            <person name="Paixao R.F.C."/>
            <person name="Parente J.A."/>
            <person name="Pedrosa F.O."/>
            <person name="Pena S.D.J."/>
            <person name="Pereira J.O."/>
            <person name="Pereira M."/>
            <person name="Pinto L.S.R.C."/>
            <person name="Pinto L.S."/>
            <person name="Porto J.I.R."/>
            <person name="Potrich D.P."/>
            <person name="Ramalho-Neto C.E."/>
            <person name="Reis A.M.M."/>
            <person name="Rigo L.U."/>
            <person name="Rondinelli E."/>
            <person name="Santos E.B.P."/>
            <person name="Santos F.R."/>
            <person name="Schneider M.P.C."/>
            <person name="Seuanez H.N."/>
            <person name="Silva A.M.R."/>
            <person name="da Silva A.L.C."/>
            <person name="Silva D.W."/>
            <person name="Silva R."/>
            <person name="Simoes I.C."/>
            <person name="Simon D."/>
            <person name="Soares C.M.A."/>
            <person name="Soares R.B.A."/>
            <person name="Souza E.M."/>
            <person name="Souza K.R.L."/>
            <person name="Souza R.C."/>
            <person name="Steffens M.B.R."/>
            <person name="Steindel M."/>
            <person name="Teixeira S.R."/>
            <person name="Urmenyi T."/>
            <person name="Vettore A."/>
            <person name="Wassem R."/>
            <person name="Zaha A."/>
            <person name="Simpson A.J.G."/>
        </authorList>
    </citation>
    <scope>NUCLEOTIDE SEQUENCE [LARGE SCALE GENOMIC DNA]</scope>
    <source>
        <strain>ATCC 12472 / DSM 30191 / JCM 1249 / CCUG 213 / NBRC 12614 / NCIMB 9131 / NCTC 9757 / MK</strain>
    </source>
</reference>
<proteinExistence type="inferred from homology"/>